<reference key="1">
    <citation type="submission" date="2009-06" db="EMBL/GenBank/DDBJ databases">
        <title>Complete sequence of Thermotogales bacterium TBF 19.5.1.</title>
        <authorList>
            <consortium name="US DOE Joint Genome Institute"/>
            <person name="Lucas S."/>
            <person name="Copeland A."/>
            <person name="Lapidus A."/>
            <person name="Glavina del Rio T."/>
            <person name="Tice H."/>
            <person name="Bruce D."/>
            <person name="Goodwin L."/>
            <person name="Pitluck S."/>
            <person name="Chertkov O."/>
            <person name="Brettin T."/>
            <person name="Detter J.C."/>
            <person name="Han C."/>
            <person name="Schmutz J."/>
            <person name="Larimer F."/>
            <person name="Land M."/>
            <person name="Hauser L."/>
            <person name="Kyrpides N."/>
            <person name="Ovchinnikova G."/>
            <person name="Noll K."/>
        </authorList>
    </citation>
    <scope>NUCLEOTIDE SEQUENCE [LARGE SCALE GENOMIC DNA]</scope>
    <source>
        <strain>ATCC BAA-1733 / DSM 21960 / TBF 19.5.1</strain>
    </source>
</reference>
<accession>C5CHD1</accession>
<organism>
    <name type="scientific">Kosmotoga olearia (strain ATCC BAA-1733 / DSM 21960 / TBF 19.5.1)</name>
    <dbReference type="NCBI Taxonomy" id="521045"/>
    <lineage>
        <taxon>Bacteria</taxon>
        <taxon>Thermotogati</taxon>
        <taxon>Thermotogota</taxon>
        <taxon>Thermotogae</taxon>
        <taxon>Kosmotogales</taxon>
        <taxon>Kosmotogaceae</taxon>
        <taxon>Kosmotoga</taxon>
    </lineage>
</organism>
<keyword id="KW-0131">Cell cycle</keyword>
<keyword id="KW-0132">Cell division</keyword>
<keyword id="KW-1185">Reference proteome</keyword>
<keyword id="KW-0717">Septation</keyword>
<dbReference type="EMBL" id="CP001634">
    <property type="protein sequence ID" value="ACR78770.1"/>
    <property type="molecule type" value="Genomic_DNA"/>
</dbReference>
<dbReference type="RefSeq" id="WP_012744558.1">
    <property type="nucleotide sequence ID" value="NC_012785.1"/>
</dbReference>
<dbReference type="SMR" id="C5CHD1"/>
<dbReference type="STRING" id="521045.Kole_0041"/>
<dbReference type="KEGG" id="kol:Kole_0041"/>
<dbReference type="eggNOG" id="COG0850">
    <property type="taxonomic scope" value="Bacteria"/>
</dbReference>
<dbReference type="HOGENOM" id="CLU_048711_2_1_0"/>
<dbReference type="OrthoDB" id="37128at2"/>
<dbReference type="Proteomes" id="UP000002382">
    <property type="component" value="Chromosome"/>
</dbReference>
<dbReference type="GO" id="GO:0000902">
    <property type="term" value="P:cell morphogenesis"/>
    <property type="evidence" value="ECO:0007669"/>
    <property type="project" value="InterPro"/>
</dbReference>
<dbReference type="GO" id="GO:0000917">
    <property type="term" value="P:division septum assembly"/>
    <property type="evidence" value="ECO:0007669"/>
    <property type="project" value="UniProtKB-KW"/>
</dbReference>
<dbReference type="GO" id="GO:1901891">
    <property type="term" value="P:regulation of cell septum assembly"/>
    <property type="evidence" value="ECO:0007669"/>
    <property type="project" value="InterPro"/>
</dbReference>
<dbReference type="Gene3D" id="2.160.20.70">
    <property type="match status" value="1"/>
</dbReference>
<dbReference type="Gene3D" id="3.30.750.50">
    <property type="entry name" value="Cell-division inhibitor MinC, N-terminal domain"/>
    <property type="match status" value="1"/>
</dbReference>
<dbReference type="HAMAP" id="MF_00267">
    <property type="entry name" value="MinC"/>
    <property type="match status" value="1"/>
</dbReference>
<dbReference type="InterPro" id="IPR016098">
    <property type="entry name" value="CAP/MinC_C"/>
</dbReference>
<dbReference type="InterPro" id="IPR013033">
    <property type="entry name" value="MinC"/>
</dbReference>
<dbReference type="InterPro" id="IPR036145">
    <property type="entry name" value="MinC_C_sf"/>
</dbReference>
<dbReference type="InterPro" id="IPR005526">
    <property type="entry name" value="Septum_form_inhib_MinC_C"/>
</dbReference>
<dbReference type="NCBIfam" id="TIGR01222">
    <property type="entry name" value="minC"/>
    <property type="match status" value="1"/>
</dbReference>
<dbReference type="NCBIfam" id="NF010598">
    <property type="entry name" value="PRK13992.1"/>
    <property type="match status" value="1"/>
</dbReference>
<dbReference type="PANTHER" id="PTHR34108">
    <property type="entry name" value="SEPTUM SITE-DETERMINING PROTEIN MINC"/>
    <property type="match status" value="1"/>
</dbReference>
<dbReference type="PANTHER" id="PTHR34108:SF1">
    <property type="entry name" value="SEPTUM SITE-DETERMINING PROTEIN MINC"/>
    <property type="match status" value="1"/>
</dbReference>
<dbReference type="Pfam" id="PF03775">
    <property type="entry name" value="MinC_C"/>
    <property type="match status" value="1"/>
</dbReference>
<dbReference type="SUPFAM" id="SSF63848">
    <property type="entry name" value="Cell-division inhibitor MinC, C-terminal domain"/>
    <property type="match status" value="1"/>
</dbReference>
<dbReference type="SUPFAM" id="SSF64043">
    <property type="entry name" value="Cell-division inhibitor MinC, N-terminal domain"/>
    <property type="match status" value="1"/>
</dbReference>
<proteinExistence type="inferred from homology"/>
<sequence length="218" mass="23927">MPIDFRMTKKGLILLIESYSSIESLKQEIMAKFNEARDFFSEGDEISLMLTQETSKPDDIVNIVSLLGNLGVRVKDILVGSLEKKNVKIGQKYDLVREKVTEVRGAQVIKRNLRSGQIVVHNYDIIVFGNVHPGAEIIAGGSIVIFGTARGILRAGYSVGDEAVIAALDLKPSLIQISGLISQDYNVYETPAVAHIRTGRIVVEKIESAKFEVKGGKI</sequence>
<protein>
    <recommendedName>
        <fullName evidence="1">Probable septum site-determining protein MinC</fullName>
    </recommendedName>
</protein>
<comment type="function">
    <text evidence="1">Cell division inhibitor that blocks the formation of polar Z ring septums. Rapidly oscillates between the poles of the cell to destabilize FtsZ filaments that have formed before they mature into polar Z rings. Prevents FtsZ polymerization.</text>
</comment>
<comment type="subunit">
    <text evidence="1">Interacts with MinD and FtsZ.</text>
</comment>
<comment type="similarity">
    <text evidence="1">Belongs to the MinC family.</text>
</comment>
<evidence type="ECO:0000255" key="1">
    <source>
        <dbReference type="HAMAP-Rule" id="MF_00267"/>
    </source>
</evidence>
<gene>
    <name evidence="1" type="primary">minC</name>
    <name type="ordered locus">Kole_0041</name>
</gene>
<name>MINC_KOSOT</name>
<feature type="chain" id="PRO_1000204696" description="Probable septum site-determining protein MinC">
    <location>
        <begin position="1"/>
        <end position="218"/>
    </location>
</feature>